<reference key="1">
    <citation type="journal article" date="1999" name="Nature">
        <title>Sequence and analysis of chromosome 2 of the plant Arabidopsis thaliana.</title>
        <authorList>
            <person name="Lin X."/>
            <person name="Kaul S."/>
            <person name="Rounsley S.D."/>
            <person name="Shea T.P."/>
            <person name="Benito M.-I."/>
            <person name="Town C.D."/>
            <person name="Fujii C.Y."/>
            <person name="Mason T.M."/>
            <person name="Bowman C.L."/>
            <person name="Barnstead M.E."/>
            <person name="Feldblyum T.V."/>
            <person name="Buell C.R."/>
            <person name="Ketchum K.A."/>
            <person name="Lee J.J."/>
            <person name="Ronning C.M."/>
            <person name="Koo H.L."/>
            <person name="Moffat K.S."/>
            <person name="Cronin L.A."/>
            <person name="Shen M."/>
            <person name="Pai G."/>
            <person name="Van Aken S."/>
            <person name="Umayam L."/>
            <person name="Tallon L.J."/>
            <person name="Gill J.E."/>
            <person name="Adams M.D."/>
            <person name="Carrera A.J."/>
            <person name="Creasy T.H."/>
            <person name="Goodman H.M."/>
            <person name="Somerville C.R."/>
            <person name="Copenhaver G.P."/>
            <person name="Preuss D."/>
            <person name="Nierman W.C."/>
            <person name="White O."/>
            <person name="Eisen J.A."/>
            <person name="Salzberg S.L."/>
            <person name="Fraser C.M."/>
            <person name="Venter J.C."/>
        </authorList>
    </citation>
    <scope>NUCLEOTIDE SEQUENCE [LARGE SCALE GENOMIC DNA]</scope>
    <source>
        <strain>cv. Columbia</strain>
    </source>
</reference>
<reference key="2">
    <citation type="journal article" date="2017" name="Plant J.">
        <title>Araport11: a complete reannotation of the Arabidopsis thaliana reference genome.</title>
        <authorList>
            <person name="Cheng C.Y."/>
            <person name="Krishnakumar V."/>
            <person name="Chan A.P."/>
            <person name="Thibaud-Nissen F."/>
            <person name="Schobel S."/>
            <person name="Town C.D."/>
        </authorList>
    </citation>
    <scope>GENOME REANNOTATION</scope>
    <source>
        <strain>cv. Columbia</strain>
    </source>
</reference>
<reference key="3">
    <citation type="journal article" date="2006" name="Plant Biotechnol. J.">
        <title>Simultaneous high-throughput recombinational cloning of open reading frames in closed and open configurations.</title>
        <authorList>
            <person name="Underwood B.A."/>
            <person name="Vanderhaeghen R."/>
            <person name="Whitford R."/>
            <person name="Town C.D."/>
            <person name="Hilson P."/>
        </authorList>
    </citation>
    <scope>NUCLEOTIDE SEQUENCE [LARGE SCALE MRNA]</scope>
    <source>
        <strain>cv. Columbia</strain>
    </source>
</reference>
<reference key="4">
    <citation type="journal article" date="2007" name="Phytochemistry">
        <title>Dirigent proteins in conifer defense II: Extended gene discovery, phylogeny, and constitutive and stress-induced gene expression in spruce (Picea spp.).</title>
        <authorList>
            <person name="Ralph S.G."/>
            <person name="Jancsik S."/>
            <person name="Bohlmann J."/>
        </authorList>
    </citation>
    <scope>GENE FAMILY</scope>
    <scope>NOMENCLATURE</scope>
</reference>
<keyword id="KW-0052">Apoplast</keyword>
<keyword id="KW-0325">Glycoprotein</keyword>
<keyword id="KW-1185">Reference proteome</keyword>
<keyword id="KW-0964">Secreted</keyword>
<keyword id="KW-0732">Signal</keyword>
<organism>
    <name type="scientific">Arabidopsis thaliana</name>
    <name type="common">Mouse-ear cress</name>
    <dbReference type="NCBI Taxonomy" id="3702"/>
    <lineage>
        <taxon>Eukaryota</taxon>
        <taxon>Viridiplantae</taxon>
        <taxon>Streptophyta</taxon>
        <taxon>Embryophyta</taxon>
        <taxon>Tracheophyta</taxon>
        <taxon>Spermatophyta</taxon>
        <taxon>Magnoliopsida</taxon>
        <taxon>eudicotyledons</taxon>
        <taxon>Gunneridae</taxon>
        <taxon>Pentapetalae</taxon>
        <taxon>rosids</taxon>
        <taxon>malvids</taxon>
        <taxon>Brassicales</taxon>
        <taxon>Brassicaceae</taxon>
        <taxon>Camelineae</taxon>
        <taxon>Arabidopsis</taxon>
    </lineage>
</organism>
<comment type="function">
    <text evidence="1">Dirigent proteins impart stereoselectivity on the phenoxy radical-coupling reaction, yielding optically active lignans from two molecules of coniferyl alcohol in the biosynthesis of lignans, flavonolignans, and alkaloids and thus plays a central role in plant secondary metabolism.</text>
</comment>
<comment type="subunit">
    <text evidence="1">Homodimer.</text>
</comment>
<comment type="subcellular location">
    <subcellularLocation>
        <location evidence="1">Secreted</location>
        <location evidence="1">Extracellular space</location>
        <location evidence="1">Apoplast</location>
    </subcellularLocation>
</comment>
<comment type="similarity">
    <text evidence="3">Belongs to the plant dirigent protein family.</text>
</comment>
<comment type="sequence caution" evidence="3">
    <conflict type="erroneous termination">
        <sequence resource="EMBL-CDS" id="ABK28504"/>
    </conflict>
    <text>Extended C-terminus.</text>
</comment>
<protein>
    <recommendedName>
        <fullName>Dirigent protein 4</fullName>
        <shortName>AtDIR4</shortName>
    </recommendedName>
</protein>
<feature type="signal peptide" evidence="2">
    <location>
        <begin position="1"/>
        <end position="20"/>
    </location>
</feature>
<feature type="chain" id="PRO_0000422835" description="Dirigent protein 4">
    <location>
        <begin position="21"/>
        <end position="186"/>
    </location>
</feature>
<feature type="glycosylation site" description="N-linked (GlcNAc...) asparagine" evidence="2">
    <location>
        <position position="67"/>
    </location>
</feature>
<feature type="glycosylation site" description="N-linked (GlcNAc...) asparagine" evidence="2">
    <location>
        <position position="126"/>
    </location>
</feature>
<feature type="glycosylation site" description="N-linked (GlcNAc...) asparagine" evidence="2">
    <location>
        <position position="169"/>
    </location>
</feature>
<feature type="glycosylation site" description="N-linked (GlcNAc...) asparagine" evidence="2">
    <location>
        <position position="180"/>
    </location>
</feature>
<dbReference type="EMBL" id="AC006264">
    <property type="protein sequence ID" value="AAD29805.1"/>
    <property type="molecule type" value="Genomic_DNA"/>
</dbReference>
<dbReference type="EMBL" id="CP002685">
    <property type="protein sequence ID" value="AEC07124.1"/>
    <property type="molecule type" value="Genomic_DNA"/>
</dbReference>
<dbReference type="EMBL" id="DQ446539">
    <property type="protein sequence ID" value="ABE65841.1"/>
    <property type="molecule type" value="mRNA"/>
</dbReference>
<dbReference type="EMBL" id="DQ653009">
    <property type="protein sequence ID" value="ABK28504.1"/>
    <property type="status" value="ALT_SEQ"/>
    <property type="molecule type" value="mRNA"/>
</dbReference>
<dbReference type="PIR" id="C84597">
    <property type="entry name" value="C84597"/>
</dbReference>
<dbReference type="RefSeq" id="NP_179707.1">
    <property type="nucleotide sequence ID" value="NM_127681.2"/>
</dbReference>
<dbReference type="SMR" id="Q9SKQ2"/>
<dbReference type="STRING" id="3702.Q9SKQ2"/>
<dbReference type="GlyCosmos" id="Q9SKQ2">
    <property type="glycosylation" value="4 sites, No reported glycans"/>
</dbReference>
<dbReference type="GlyGen" id="Q9SKQ2">
    <property type="glycosylation" value="4 sites"/>
</dbReference>
<dbReference type="PaxDb" id="3702-AT2G21110.1"/>
<dbReference type="EnsemblPlants" id="AT2G21110.1">
    <property type="protein sequence ID" value="AT2G21110.1"/>
    <property type="gene ID" value="AT2G21110"/>
</dbReference>
<dbReference type="GeneID" id="816646"/>
<dbReference type="Gramene" id="AT2G21110.1">
    <property type="protein sequence ID" value="AT2G21110.1"/>
    <property type="gene ID" value="AT2G21110"/>
</dbReference>
<dbReference type="KEGG" id="ath:AT2G21110"/>
<dbReference type="Araport" id="AT2G21110"/>
<dbReference type="TAIR" id="AT2G21110"/>
<dbReference type="eggNOG" id="ENOG502RXRA">
    <property type="taxonomic scope" value="Eukaryota"/>
</dbReference>
<dbReference type="HOGENOM" id="CLU_087111_2_1_1"/>
<dbReference type="InParanoid" id="Q9SKQ2"/>
<dbReference type="OMA" id="MYRIQEM"/>
<dbReference type="PhylomeDB" id="Q9SKQ2"/>
<dbReference type="PRO" id="PR:Q9SKQ2"/>
<dbReference type="Proteomes" id="UP000006548">
    <property type="component" value="Chromosome 2"/>
</dbReference>
<dbReference type="ExpressionAtlas" id="Q9SKQ2">
    <property type="expression patterns" value="baseline and differential"/>
</dbReference>
<dbReference type="GO" id="GO:0048046">
    <property type="term" value="C:apoplast"/>
    <property type="evidence" value="ECO:0007669"/>
    <property type="project" value="UniProtKB-SubCell"/>
</dbReference>
<dbReference type="GO" id="GO:0009699">
    <property type="term" value="P:phenylpropanoid biosynthetic process"/>
    <property type="evidence" value="ECO:0007669"/>
    <property type="project" value="UniProtKB-ARBA"/>
</dbReference>
<dbReference type="Gene3D" id="2.40.480.10">
    <property type="entry name" value="Allene oxide cyclase-like"/>
    <property type="match status" value="1"/>
</dbReference>
<dbReference type="InterPro" id="IPR044859">
    <property type="entry name" value="Allene_oxi_cyc_Dirigent"/>
</dbReference>
<dbReference type="InterPro" id="IPR004265">
    <property type="entry name" value="Dirigent"/>
</dbReference>
<dbReference type="PANTHER" id="PTHR21495">
    <property type="entry name" value="NUCLEOPORIN-RELATED"/>
    <property type="match status" value="1"/>
</dbReference>
<dbReference type="Pfam" id="PF03018">
    <property type="entry name" value="Dirigent"/>
    <property type="match status" value="1"/>
</dbReference>
<accession>Q9SKQ2</accession>
<accession>A0MEN7</accession>
<name>DIR4_ARATH</name>
<gene>
    <name type="primary">DIR4</name>
    <name type="ordered locus">At2g21110</name>
    <name type="ORF">F26H11.13</name>
</gene>
<sequence length="186" mass="20427">MGKNLGLVVSFYLCITFALGEYFSETRPITPKQLVVTNLHFFFHDTLTAPNPSAILIAKPTHTRGDNDSSPSPFGSLFALDDPLTVGPDPKSEKIGNARGMYVSSGKHVPTLTMYVDFGFTSGKFNGSSIAVFSRNTITEKEREVAVVGGRGRFRMARGVAQLNTYYVNLTNGDAIVEYNVTLYHY</sequence>
<evidence type="ECO:0000250" key="1"/>
<evidence type="ECO:0000255" key="2"/>
<evidence type="ECO:0000305" key="3"/>
<proteinExistence type="evidence at transcript level"/>